<reference key="1">
    <citation type="journal article" date="2000" name="DNA Res.">
        <title>Structural analysis of Arabidopsis thaliana chromosome 5. X. Sequence features of the regions of 3,076,755 bp covered by sixty P1 and TAC clones.</title>
        <authorList>
            <person name="Sato S."/>
            <person name="Nakamura Y."/>
            <person name="Kaneko T."/>
            <person name="Katoh T."/>
            <person name="Asamizu E."/>
            <person name="Kotani H."/>
            <person name="Tabata S."/>
        </authorList>
    </citation>
    <scope>NUCLEOTIDE SEQUENCE [LARGE SCALE GENOMIC DNA]</scope>
    <source>
        <strain>cv. Columbia</strain>
    </source>
</reference>
<reference key="2">
    <citation type="journal article" date="2017" name="Plant J.">
        <title>Araport11: a complete reannotation of the Arabidopsis thaliana reference genome.</title>
        <authorList>
            <person name="Cheng C.Y."/>
            <person name="Krishnakumar V."/>
            <person name="Chan A.P."/>
            <person name="Thibaud-Nissen F."/>
            <person name="Schobel S."/>
            <person name="Town C.D."/>
        </authorList>
    </citation>
    <scope>GENOME REANNOTATION</scope>
    <source>
        <strain>cv. Columbia</strain>
    </source>
</reference>
<reference key="3">
    <citation type="journal article" date="2002" name="Science">
        <title>Functional annotation of a full-length Arabidopsis cDNA collection.</title>
        <authorList>
            <person name="Seki M."/>
            <person name="Narusaka M."/>
            <person name="Kamiya A."/>
            <person name="Ishida J."/>
            <person name="Satou M."/>
            <person name="Sakurai T."/>
            <person name="Nakajima M."/>
            <person name="Enju A."/>
            <person name="Akiyama K."/>
            <person name="Oono Y."/>
            <person name="Muramatsu M."/>
            <person name="Hayashizaki Y."/>
            <person name="Kawai J."/>
            <person name="Carninci P."/>
            <person name="Itoh M."/>
            <person name="Ishii Y."/>
            <person name="Arakawa T."/>
            <person name="Shibata K."/>
            <person name="Shinagawa A."/>
            <person name="Shinozaki K."/>
        </authorList>
    </citation>
    <scope>NUCLEOTIDE SEQUENCE [LARGE SCALE MRNA]</scope>
    <source>
        <strain>cv. Columbia</strain>
    </source>
</reference>
<reference key="4">
    <citation type="journal article" date="2003" name="Science">
        <title>Empirical analysis of transcriptional activity in the Arabidopsis genome.</title>
        <authorList>
            <person name="Yamada K."/>
            <person name="Lim J."/>
            <person name="Dale J.M."/>
            <person name="Chen H."/>
            <person name="Shinn P."/>
            <person name="Palm C.J."/>
            <person name="Southwick A.M."/>
            <person name="Wu H.C."/>
            <person name="Kim C.J."/>
            <person name="Nguyen M."/>
            <person name="Pham P.K."/>
            <person name="Cheuk R.F."/>
            <person name="Karlin-Newmann G."/>
            <person name="Liu S.X."/>
            <person name="Lam B."/>
            <person name="Sakano H."/>
            <person name="Wu T."/>
            <person name="Yu G."/>
            <person name="Miranda M."/>
            <person name="Quach H.L."/>
            <person name="Tripp M."/>
            <person name="Chang C.H."/>
            <person name="Lee J.M."/>
            <person name="Toriumi M.J."/>
            <person name="Chan M.M."/>
            <person name="Tang C.C."/>
            <person name="Onodera C.S."/>
            <person name="Deng J.M."/>
            <person name="Akiyama K."/>
            <person name="Ansari Y."/>
            <person name="Arakawa T."/>
            <person name="Banh J."/>
            <person name="Banno F."/>
            <person name="Bowser L."/>
            <person name="Brooks S.Y."/>
            <person name="Carninci P."/>
            <person name="Chao Q."/>
            <person name="Choy N."/>
            <person name="Enju A."/>
            <person name="Goldsmith A.D."/>
            <person name="Gurjal M."/>
            <person name="Hansen N.F."/>
            <person name="Hayashizaki Y."/>
            <person name="Johnson-Hopson C."/>
            <person name="Hsuan V.W."/>
            <person name="Iida K."/>
            <person name="Karnes M."/>
            <person name="Khan S."/>
            <person name="Koesema E."/>
            <person name="Ishida J."/>
            <person name="Jiang P.X."/>
            <person name="Jones T."/>
            <person name="Kawai J."/>
            <person name="Kamiya A."/>
            <person name="Meyers C."/>
            <person name="Nakajima M."/>
            <person name="Narusaka M."/>
            <person name="Seki M."/>
            <person name="Sakurai T."/>
            <person name="Satou M."/>
            <person name="Tamse R."/>
            <person name="Vaysberg M."/>
            <person name="Wallender E.K."/>
            <person name="Wong C."/>
            <person name="Yamamura Y."/>
            <person name="Yuan S."/>
            <person name="Shinozaki K."/>
            <person name="Davis R.W."/>
            <person name="Theologis A."/>
            <person name="Ecker J.R."/>
        </authorList>
    </citation>
    <scope>NUCLEOTIDE SEQUENCE [LARGE SCALE MRNA] OF 1-112</scope>
    <source>
        <strain>cv. Columbia</strain>
    </source>
</reference>
<reference key="5">
    <citation type="journal article" date="2009" name="Plant Physiol.">
        <title>In-depth proteome analysis of Arabidopsis leaf peroxisomes combined with in vivo subcellular targeting verification indicates novel metabolic and regulatory functions of peroxisomes.</title>
        <authorList>
            <person name="Reumann S."/>
            <person name="Quan S."/>
            <person name="Aung K."/>
            <person name="Yang P."/>
            <person name="Manandhar-Shrestha K."/>
            <person name="Holbrook D."/>
            <person name="Linka N."/>
            <person name="Switzenberg R."/>
            <person name="Wilkerson C.G."/>
            <person name="Weber A.P."/>
            <person name="Olsen L.J."/>
            <person name="Hu J."/>
        </authorList>
    </citation>
    <scope>SUBCELLULAR LOCATION</scope>
</reference>
<reference key="6">
    <citation type="journal article" date="2010" name="FEBS Lett.">
        <title>Dual activity of certain HIT-proteins: A. thaliana Hint4 and C. elegans DcpS act on adenosine 5'-phosphosulfate as hydrolases (forming AMP) and as phosphorylases (forming ADP).</title>
        <authorList>
            <person name="Guranowski A."/>
            <person name="Wojdyla A.M."/>
            <person name="Zimny J."/>
            <person name="Wypijewska A."/>
            <person name="Kowalska J."/>
            <person name="Jemielity J."/>
            <person name="Davis R.E."/>
            <person name="Bieganowski P."/>
        </authorList>
    </citation>
    <scope>FUNCTION</scope>
    <scope>CATALYTIC ACTIVITY</scope>
</reference>
<organism>
    <name type="scientific">Arabidopsis thaliana</name>
    <name type="common">Mouse-ear cress</name>
    <dbReference type="NCBI Taxonomy" id="3702"/>
    <lineage>
        <taxon>Eukaryota</taxon>
        <taxon>Viridiplantae</taxon>
        <taxon>Streptophyta</taxon>
        <taxon>Embryophyta</taxon>
        <taxon>Tracheophyta</taxon>
        <taxon>Spermatophyta</taxon>
        <taxon>Magnoliopsida</taxon>
        <taxon>eudicotyledons</taxon>
        <taxon>Gunneridae</taxon>
        <taxon>Pentapetalae</taxon>
        <taxon>rosids</taxon>
        <taxon>malvids</taxon>
        <taxon>Brassicales</taxon>
        <taxon>Brassicaceae</taxon>
        <taxon>Camelineae</taxon>
        <taxon>Arabidopsis</taxon>
    </lineage>
</organism>
<sequence>MEARRLAILCSHLNPPGPNPTRDPTLRVSDCSSGSSGDGKVESSTLQNDCVFCKIIRGESPCLKLYEDDMCLCILDTNPLSHGHSLIIPKLHYPTLEETPPSVVAAMCSKVPLISNAIVKATGSDSFNLLVNNGAAAGQVIFHTHIHIIPRKERDCLWASESLRRHSLKLDKEASQLVSCVRRHLCSLPEEQLVQPS</sequence>
<evidence type="ECO:0000250" key="1">
    <source>
        <dbReference type="UniProtKB" id="P49789"/>
    </source>
</evidence>
<evidence type="ECO:0000255" key="2">
    <source>
        <dbReference type="PROSITE-ProRule" id="PRU00464"/>
    </source>
</evidence>
<evidence type="ECO:0000256" key="3">
    <source>
        <dbReference type="SAM" id="MobiDB-lite"/>
    </source>
</evidence>
<evidence type="ECO:0000269" key="4">
    <source>
    </source>
</evidence>
<evidence type="ECO:0000269" key="5">
    <source>
    </source>
</evidence>
<evidence type="ECO:0000303" key="6">
    <source>
    </source>
</evidence>
<evidence type="ECO:0000305" key="7"/>
<evidence type="ECO:0000312" key="8">
    <source>
        <dbReference type="Araport" id="AT5G48545"/>
    </source>
</evidence>
<name>HINT3_ARATH</name>
<accession>F4K1R2</accession>
<accession>Q8GWE2</accession>
<dbReference type="EC" id="3.6.2.1" evidence="5"/>
<dbReference type="EMBL" id="AB020745">
    <property type="status" value="NOT_ANNOTATED_CDS"/>
    <property type="molecule type" value="Genomic_DNA"/>
</dbReference>
<dbReference type="EMBL" id="CP002688">
    <property type="protein sequence ID" value="AED95685.1"/>
    <property type="molecule type" value="Genomic_DNA"/>
</dbReference>
<dbReference type="EMBL" id="AK118903">
    <property type="protein sequence ID" value="BAC43487.1"/>
    <property type="status" value="ALT_SEQ"/>
    <property type="molecule type" value="mRNA"/>
</dbReference>
<dbReference type="EMBL" id="BT004955">
    <property type="protein sequence ID" value="AAO50488.1"/>
    <property type="status" value="ALT_SEQ"/>
    <property type="molecule type" value="mRNA"/>
</dbReference>
<dbReference type="RefSeq" id="NP_974907.1">
    <property type="nucleotide sequence ID" value="NM_203178.3"/>
</dbReference>
<dbReference type="SMR" id="F4K1R2"/>
<dbReference type="FunCoup" id="F4K1R2">
    <property type="interactions" value="195"/>
</dbReference>
<dbReference type="STRING" id="3702.F4K1R2"/>
<dbReference type="iPTMnet" id="F4K1R2"/>
<dbReference type="PaxDb" id="3702-AT5G48545.1"/>
<dbReference type="ProteomicsDB" id="228802"/>
<dbReference type="EnsemblPlants" id="AT5G48545.1">
    <property type="protein sequence ID" value="AT5G48545.1"/>
    <property type="gene ID" value="AT5G48545"/>
</dbReference>
<dbReference type="GeneID" id="2746201"/>
<dbReference type="Gramene" id="AT5G48545.1">
    <property type="protein sequence ID" value="AT5G48545.1"/>
    <property type="gene ID" value="AT5G48545"/>
</dbReference>
<dbReference type="KEGG" id="ath:AT5G48545"/>
<dbReference type="Araport" id="AT5G48545"/>
<dbReference type="TAIR" id="AT5G48545">
    <property type="gene designation" value="HINT3"/>
</dbReference>
<dbReference type="eggNOG" id="KOG3275">
    <property type="taxonomic scope" value="Eukaryota"/>
</dbReference>
<dbReference type="HOGENOM" id="CLU_056776_2_0_1"/>
<dbReference type="InParanoid" id="F4K1R2"/>
<dbReference type="OrthoDB" id="672793at2759"/>
<dbReference type="PRO" id="PR:F4K1R2"/>
<dbReference type="Proteomes" id="UP000006548">
    <property type="component" value="Chromosome 5"/>
</dbReference>
<dbReference type="ExpressionAtlas" id="F4K1R2">
    <property type="expression patterns" value="baseline and differential"/>
</dbReference>
<dbReference type="GO" id="GO:0005777">
    <property type="term" value="C:peroxisome"/>
    <property type="evidence" value="ECO:0000314"/>
    <property type="project" value="TAIR"/>
</dbReference>
<dbReference type="GO" id="GO:0047627">
    <property type="term" value="F:adenylylsulfatase activity"/>
    <property type="evidence" value="ECO:0000314"/>
    <property type="project" value="TAIR"/>
</dbReference>
<dbReference type="GO" id="GO:0000166">
    <property type="term" value="F:nucleotide binding"/>
    <property type="evidence" value="ECO:0007669"/>
    <property type="project" value="UniProtKB-KW"/>
</dbReference>
<dbReference type="GO" id="GO:0009150">
    <property type="term" value="P:purine ribonucleotide metabolic process"/>
    <property type="evidence" value="ECO:0000314"/>
    <property type="project" value="TAIR"/>
</dbReference>
<dbReference type="GO" id="GO:0006790">
    <property type="term" value="P:sulfur compound metabolic process"/>
    <property type="evidence" value="ECO:0000314"/>
    <property type="project" value="TAIR"/>
</dbReference>
<dbReference type="CDD" id="cd01277">
    <property type="entry name" value="HINT_subgroup"/>
    <property type="match status" value="1"/>
</dbReference>
<dbReference type="FunFam" id="3.30.428.10:FF:000023">
    <property type="entry name" value="Adenylylsulfatase HINT3"/>
    <property type="match status" value="1"/>
</dbReference>
<dbReference type="Gene3D" id="3.30.428.10">
    <property type="entry name" value="HIT-like"/>
    <property type="match status" value="1"/>
</dbReference>
<dbReference type="InterPro" id="IPR039384">
    <property type="entry name" value="HINT"/>
</dbReference>
<dbReference type="InterPro" id="IPR019808">
    <property type="entry name" value="Histidine_triad_CS"/>
</dbReference>
<dbReference type="InterPro" id="IPR001310">
    <property type="entry name" value="Histidine_triad_HIT"/>
</dbReference>
<dbReference type="InterPro" id="IPR011146">
    <property type="entry name" value="HIT-like"/>
</dbReference>
<dbReference type="InterPro" id="IPR036265">
    <property type="entry name" value="HIT-like_sf"/>
</dbReference>
<dbReference type="PANTHER" id="PTHR47670">
    <property type="entry name" value="ADENYLYLSULFATASE HINT3"/>
    <property type="match status" value="1"/>
</dbReference>
<dbReference type="PANTHER" id="PTHR47670:SF1">
    <property type="entry name" value="ADENYLYLSULFATASE HINT3"/>
    <property type="match status" value="1"/>
</dbReference>
<dbReference type="Pfam" id="PF01230">
    <property type="entry name" value="HIT"/>
    <property type="match status" value="1"/>
</dbReference>
<dbReference type="PRINTS" id="PR00332">
    <property type="entry name" value="HISTRIAD"/>
</dbReference>
<dbReference type="SUPFAM" id="SSF54197">
    <property type="entry name" value="HIT-like"/>
    <property type="match status" value="1"/>
</dbReference>
<dbReference type="PROSITE" id="PS00892">
    <property type="entry name" value="HIT_1"/>
    <property type="match status" value="1"/>
</dbReference>
<dbReference type="PROSITE" id="PS51084">
    <property type="entry name" value="HIT_2"/>
    <property type="match status" value="1"/>
</dbReference>
<feature type="chain" id="PRO_0000436747" description="Adenylylsulfatase HINT3">
    <location>
        <begin position="1"/>
        <end position="197"/>
    </location>
</feature>
<feature type="domain" description="HIT" evidence="2">
    <location>
        <begin position="51"/>
        <end position="158"/>
    </location>
</feature>
<feature type="region of interest" description="Disordered" evidence="3">
    <location>
        <begin position="14"/>
        <end position="43"/>
    </location>
</feature>
<feature type="short sequence motif" description="Histidine triad motif" evidence="2">
    <location>
        <begin position="143"/>
        <end position="147"/>
    </location>
</feature>
<feature type="active site" description="Tele-AMP-histidine intermediate" evidence="1">
    <location>
        <position position="145"/>
    </location>
</feature>
<feature type="binding site" evidence="1">
    <location>
        <position position="147"/>
    </location>
    <ligand>
        <name>substrate</name>
    </ligand>
</feature>
<proteinExistence type="evidence at protein level"/>
<comment type="function">
    <text evidence="5">Possesses adenylylsulfatase activity in vitro.</text>
</comment>
<comment type="catalytic activity">
    <reaction evidence="5">
        <text>adenosine 5'-phosphosulfate + H2O = sulfate + AMP + 2 H(+)</text>
        <dbReference type="Rhea" id="RHEA:17041"/>
        <dbReference type="ChEBI" id="CHEBI:15377"/>
        <dbReference type="ChEBI" id="CHEBI:15378"/>
        <dbReference type="ChEBI" id="CHEBI:16189"/>
        <dbReference type="ChEBI" id="CHEBI:58243"/>
        <dbReference type="ChEBI" id="CHEBI:456215"/>
        <dbReference type="EC" id="3.6.2.1"/>
    </reaction>
</comment>
<comment type="subcellular location">
    <subcellularLocation>
        <location evidence="4">Peroxisome</location>
    </subcellularLocation>
</comment>
<comment type="sequence caution" evidence="7">
    <conflict type="miscellaneous discrepancy">
        <sequence resource="EMBL-CDS" id="AAO50488"/>
    </conflict>
    <text>Intron retention.</text>
</comment>
<comment type="sequence caution" evidence="7">
    <conflict type="miscellaneous discrepancy">
        <sequence resource="EMBL-CDS" id="BAC43487"/>
    </conflict>
    <text>Intron retention.</text>
</comment>
<keyword id="KW-0378">Hydrolase</keyword>
<keyword id="KW-0547">Nucleotide-binding</keyword>
<keyword id="KW-0576">Peroxisome</keyword>
<keyword id="KW-1185">Reference proteome</keyword>
<protein>
    <recommendedName>
        <fullName evidence="7">Adenylylsulfatase HINT3</fullName>
        <ecNumber evidence="5">3.6.2.1</ecNumber>
    </recommendedName>
    <alternativeName>
        <fullName evidence="7">Histidine triad nucleotide-binding protein 3</fullName>
    </alternativeName>
</protein>
<gene>
    <name evidence="6" type="primary">HINT3</name>
    <name evidence="8" type="ordered locus">At5g48545</name>
</gene>